<accession>Q1WUT3</accession>
<organism>
    <name type="scientific">Ligilactobacillus salivarius (strain UCC118)</name>
    <name type="common">Lactobacillus salivarius</name>
    <dbReference type="NCBI Taxonomy" id="362948"/>
    <lineage>
        <taxon>Bacteria</taxon>
        <taxon>Bacillati</taxon>
        <taxon>Bacillota</taxon>
        <taxon>Bacilli</taxon>
        <taxon>Lactobacillales</taxon>
        <taxon>Lactobacillaceae</taxon>
        <taxon>Ligilactobacillus</taxon>
    </lineage>
</organism>
<keyword id="KW-0030">Aminoacyl-tRNA synthetase</keyword>
<keyword id="KW-0067">ATP-binding</keyword>
<keyword id="KW-0963">Cytoplasm</keyword>
<keyword id="KW-0436">Ligase</keyword>
<keyword id="KW-0547">Nucleotide-binding</keyword>
<keyword id="KW-0648">Protein biosynthesis</keyword>
<keyword id="KW-1185">Reference proteome</keyword>
<evidence type="ECO:0000255" key="1">
    <source>
        <dbReference type="HAMAP-Rule" id="MF_00049"/>
    </source>
</evidence>
<proteinExistence type="inferred from homology"/>
<comment type="catalytic activity">
    <reaction evidence="1">
        <text>tRNA(Leu) + L-leucine + ATP = L-leucyl-tRNA(Leu) + AMP + diphosphate</text>
        <dbReference type="Rhea" id="RHEA:11688"/>
        <dbReference type="Rhea" id="RHEA-COMP:9613"/>
        <dbReference type="Rhea" id="RHEA-COMP:9622"/>
        <dbReference type="ChEBI" id="CHEBI:30616"/>
        <dbReference type="ChEBI" id="CHEBI:33019"/>
        <dbReference type="ChEBI" id="CHEBI:57427"/>
        <dbReference type="ChEBI" id="CHEBI:78442"/>
        <dbReference type="ChEBI" id="CHEBI:78494"/>
        <dbReference type="ChEBI" id="CHEBI:456215"/>
        <dbReference type="EC" id="6.1.1.4"/>
    </reaction>
</comment>
<comment type="subcellular location">
    <subcellularLocation>
        <location evidence="1">Cytoplasm</location>
    </subcellularLocation>
</comment>
<comment type="similarity">
    <text evidence="1">Belongs to the class-I aminoacyl-tRNA synthetase family.</text>
</comment>
<name>SYL_LIGS1</name>
<sequence>MSYKHIEIEKKWQRYWEEHKTFKTTEDDDKKNYYALDMFPYPSGQGLHVGHPEGYTATDIMARMKRMQGYNVLHPMGWDAFGLPAEQYALNTGNSPREFTKKNVNNFRRQIKSLGLSYDWDREVNTTDPAYYKWTQWIFEQLYKKGLAYEAEVPVNWSPDLGTVVANEEVIDGKTERGGFPVIRKPMRQWVLKITAYADRLIDDLDDLDWPEAIKEQQRNWIGRSVGAAINFPVSGDENTKIEVFSTRPDTIFGVAALVLAPEHELVKQLTTPEHENEVEAYIEKISHKSDLERTDLAKDKTGVFTGSYVVNPVSGEKLPIWIADYVLNSYGTGAVMVVPAHDERDHEFAQKFDLPIVQVIEGGDVQKEAYTGDGVHINSDFLNGMDKEEAIDAINNWLEENGVGEKKVNYRLRDWLFSRQRYWGEPIPVIHWEDGETTLVPEDELPLYLPKATDIKPSGTGESPLANLDDWVNVVDENGRKGRRETNTMPQWAGSSWYFLRYIDPHNNHEIADYEKLKEWLPVNLYVGGAEHAVLHLLYARFWHKFLYDLGVVPTKEPFQKLVNQGMILGSNHEKMSKSKGNVVNPDDIVEQYGADTLRLYEMFMGPLDASIPWSEEGLGGAHKFINRVWNLLIDENDNLRDRVTTINNHDLDKIYNETVKKVTEDYEAMHFNTAISQLMVFVNNAYKADSLPLEYVEGLVKLLSPVVPHITEELWSKLGHVGSIAYAKWPTYDESKLVEDVVEIVVQINGKVRQHLQVSKDASREELQALALNDERIKQELADKEVKKVIAVPGKLVSIVVAK</sequence>
<dbReference type="EC" id="6.1.1.4" evidence="1"/>
<dbReference type="EMBL" id="CP000233">
    <property type="protein sequence ID" value="ABD99252.1"/>
    <property type="molecule type" value="Genomic_DNA"/>
</dbReference>
<dbReference type="RefSeq" id="WP_011475758.1">
    <property type="nucleotide sequence ID" value="NC_007929.1"/>
</dbReference>
<dbReference type="RefSeq" id="YP_535335.1">
    <property type="nucleotide sequence ID" value="NC_007929.1"/>
</dbReference>
<dbReference type="SMR" id="Q1WUT3"/>
<dbReference type="STRING" id="362948.LSL_0442"/>
<dbReference type="KEGG" id="lsl:LSL_0442"/>
<dbReference type="PATRIC" id="fig|362948.14.peg.518"/>
<dbReference type="HOGENOM" id="CLU_004427_0_0_9"/>
<dbReference type="OrthoDB" id="9810365at2"/>
<dbReference type="Proteomes" id="UP000006559">
    <property type="component" value="Chromosome"/>
</dbReference>
<dbReference type="GO" id="GO:0005829">
    <property type="term" value="C:cytosol"/>
    <property type="evidence" value="ECO:0007669"/>
    <property type="project" value="TreeGrafter"/>
</dbReference>
<dbReference type="GO" id="GO:0002161">
    <property type="term" value="F:aminoacyl-tRNA deacylase activity"/>
    <property type="evidence" value="ECO:0007669"/>
    <property type="project" value="InterPro"/>
</dbReference>
<dbReference type="GO" id="GO:0005524">
    <property type="term" value="F:ATP binding"/>
    <property type="evidence" value="ECO:0007669"/>
    <property type="project" value="UniProtKB-UniRule"/>
</dbReference>
<dbReference type="GO" id="GO:0004823">
    <property type="term" value="F:leucine-tRNA ligase activity"/>
    <property type="evidence" value="ECO:0007669"/>
    <property type="project" value="UniProtKB-UniRule"/>
</dbReference>
<dbReference type="GO" id="GO:0006429">
    <property type="term" value="P:leucyl-tRNA aminoacylation"/>
    <property type="evidence" value="ECO:0007669"/>
    <property type="project" value="UniProtKB-UniRule"/>
</dbReference>
<dbReference type="CDD" id="cd07958">
    <property type="entry name" value="Anticodon_Ia_Leu_BEm"/>
    <property type="match status" value="1"/>
</dbReference>
<dbReference type="CDD" id="cd00812">
    <property type="entry name" value="LeuRS_core"/>
    <property type="match status" value="1"/>
</dbReference>
<dbReference type="FunFam" id="3.10.20.590:FF:000001">
    <property type="entry name" value="Leucine--tRNA ligase"/>
    <property type="match status" value="1"/>
</dbReference>
<dbReference type="FunFam" id="3.40.50.620:FF:000056">
    <property type="entry name" value="Leucine--tRNA ligase"/>
    <property type="match status" value="1"/>
</dbReference>
<dbReference type="FunFam" id="3.40.50.620:FF:000077">
    <property type="entry name" value="Leucine--tRNA ligase"/>
    <property type="match status" value="1"/>
</dbReference>
<dbReference type="FunFam" id="1.10.730.10:FF:000011">
    <property type="entry name" value="Leucine--tRNA ligase chloroplastic/mitochondrial"/>
    <property type="match status" value="1"/>
</dbReference>
<dbReference type="Gene3D" id="3.10.20.590">
    <property type="match status" value="1"/>
</dbReference>
<dbReference type="Gene3D" id="3.40.50.620">
    <property type="entry name" value="HUPs"/>
    <property type="match status" value="2"/>
</dbReference>
<dbReference type="Gene3D" id="1.10.730.10">
    <property type="entry name" value="Isoleucyl-tRNA Synthetase, Domain 1"/>
    <property type="match status" value="1"/>
</dbReference>
<dbReference type="HAMAP" id="MF_00049_B">
    <property type="entry name" value="Leu_tRNA_synth_B"/>
    <property type="match status" value="1"/>
</dbReference>
<dbReference type="InterPro" id="IPR001412">
    <property type="entry name" value="aa-tRNA-synth_I_CS"/>
</dbReference>
<dbReference type="InterPro" id="IPR002300">
    <property type="entry name" value="aa-tRNA-synth_Ia"/>
</dbReference>
<dbReference type="InterPro" id="IPR002302">
    <property type="entry name" value="Leu-tRNA-ligase"/>
</dbReference>
<dbReference type="InterPro" id="IPR025709">
    <property type="entry name" value="Leu_tRNA-synth_edit"/>
</dbReference>
<dbReference type="InterPro" id="IPR013155">
    <property type="entry name" value="M/V/L/I-tRNA-synth_anticd-bd"/>
</dbReference>
<dbReference type="InterPro" id="IPR015413">
    <property type="entry name" value="Methionyl/Leucyl_tRNA_Synth"/>
</dbReference>
<dbReference type="InterPro" id="IPR014729">
    <property type="entry name" value="Rossmann-like_a/b/a_fold"/>
</dbReference>
<dbReference type="InterPro" id="IPR009080">
    <property type="entry name" value="tRNAsynth_Ia_anticodon-bd"/>
</dbReference>
<dbReference type="InterPro" id="IPR009008">
    <property type="entry name" value="Val/Leu/Ile-tRNA-synth_edit"/>
</dbReference>
<dbReference type="NCBIfam" id="TIGR00396">
    <property type="entry name" value="leuS_bact"/>
    <property type="match status" value="1"/>
</dbReference>
<dbReference type="PANTHER" id="PTHR43740:SF2">
    <property type="entry name" value="LEUCINE--TRNA LIGASE, MITOCHONDRIAL"/>
    <property type="match status" value="1"/>
</dbReference>
<dbReference type="PANTHER" id="PTHR43740">
    <property type="entry name" value="LEUCYL-TRNA SYNTHETASE"/>
    <property type="match status" value="1"/>
</dbReference>
<dbReference type="Pfam" id="PF08264">
    <property type="entry name" value="Anticodon_1"/>
    <property type="match status" value="1"/>
</dbReference>
<dbReference type="Pfam" id="PF00133">
    <property type="entry name" value="tRNA-synt_1"/>
    <property type="match status" value="1"/>
</dbReference>
<dbReference type="Pfam" id="PF13603">
    <property type="entry name" value="tRNA-synt_1_2"/>
    <property type="match status" value="1"/>
</dbReference>
<dbReference type="Pfam" id="PF09334">
    <property type="entry name" value="tRNA-synt_1g"/>
    <property type="match status" value="1"/>
</dbReference>
<dbReference type="PRINTS" id="PR00985">
    <property type="entry name" value="TRNASYNTHLEU"/>
</dbReference>
<dbReference type="SUPFAM" id="SSF47323">
    <property type="entry name" value="Anticodon-binding domain of a subclass of class I aminoacyl-tRNA synthetases"/>
    <property type="match status" value="1"/>
</dbReference>
<dbReference type="SUPFAM" id="SSF52374">
    <property type="entry name" value="Nucleotidylyl transferase"/>
    <property type="match status" value="1"/>
</dbReference>
<dbReference type="SUPFAM" id="SSF50677">
    <property type="entry name" value="ValRS/IleRS/LeuRS editing domain"/>
    <property type="match status" value="1"/>
</dbReference>
<dbReference type="PROSITE" id="PS00178">
    <property type="entry name" value="AA_TRNA_LIGASE_I"/>
    <property type="match status" value="1"/>
</dbReference>
<protein>
    <recommendedName>
        <fullName evidence="1">Leucine--tRNA ligase</fullName>
        <ecNumber evidence="1">6.1.1.4</ecNumber>
    </recommendedName>
    <alternativeName>
        <fullName evidence="1">Leucyl-tRNA synthetase</fullName>
        <shortName evidence="1">LeuRS</shortName>
    </alternativeName>
</protein>
<reference key="1">
    <citation type="journal article" date="2006" name="Proc. Natl. Acad. Sci. U.S.A.">
        <title>Multireplicon genome architecture of Lactobacillus salivarius.</title>
        <authorList>
            <person name="Claesson M.J."/>
            <person name="Li Y."/>
            <person name="Leahy S."/>
            <person name="Canchaya C."/>
            <person name="van Pijkeren J.P."/>
            <person name="Cerdeno-Tarraga A.M."/>
            <person name="Parkhill J."/>
            <person name="Flynn S."/>
            <person name="O'Sullivan G.C."/>
            <person name="Collins J.K."/>
            <person name="Higgins D."/>
            <person name="Shanahan F."/>
            <person name="Fitzgerald G.F."/>
            <person name="van Sinderen D."/>
            <person name="O'Toole P.W."/>
        </authorList>
    </citation>
    <scope>NUCLEOTIDE SEQUENCE [LARGE SCALE GENOMIC DNA]</scope>
    <source>
        <strain>UCC118</strain>
    </source>
</reference>
<feature type="chain" id="PRO_1000009361" description="Leucine--tRNA ligase">
    <location>
        <begin position="1"/>
        <end position="805"/>
    </location>
</feature>
<feature type="short sequence motif" description="'HIGH' region">
    <location>
        <begin position="40"/>
        <end position="51"/>
    </location>
</feature>
<feature type="short sequence motif" description="'KMSKS' region">
    <location>
        <begin position="576"/>
        <end position="580"/>
    </location>
</feature>
<feature type="binding site" evidence="1">
    <location>
        <position position="579"/>
    </location>
    <ligand>
        <name>ATP</name>
        <dbReference type="ChEBI" id="CHEBI:30616"/>
    </ligand>
</feature>
<gene>
    <name evidence="1" type="primary">leuS</name>
    <name type="ordered locus">LSL_0442</name>
</gene>